<protein>
    <recommendedName>
        <fullName evidence="1">Small ribosomal subunit protein uS10</fullName>
    </recommendedName>
    <alternativeName>
        <fullName evidence="2">30S ribosomal protein S10</fullName>
    </alternativeName>
</protein>
<gene>
    <name evidence="1" type="primary">rpsJ</name>
    <name type="ordered locus">Sde_0959</name>
</gene>
<name>RS10_SACD2</name>
<reference key="1">
    <citation type="journal article" date="2008" name="PLoS Genet.">
        <title>Complete genome sequence of the complex carbohydrate-degrading marine bacterium, Saccharophagus degradans strain 2-40 T.</title>
        <authorList>
            <person name="Weiner R.M."/>
            <person name="Taylor L.E. II"/>
            <person name="Henrissat B."/>
            <person name="Hauser L."/>
            <person name="Land M."/>
            <person name="Coutinho P.M."/>
            <person name="Rancurel C."/>
            <person name="Saunders E.H."/>
            <person name="Longmire A.G."/>
            <person name="Zhang H."/>
            <person name="Bayer E.A."/>
            <person name="Gilbert H.J."/>
            <person name="Larimer F."/>
            <person name="Zhulin I.B."/>
            <person name="Ekborg N.A."/>
            <person name="Lamed R."/>
            <person name="Richardson P.M."/>
            <person name="Borovok I."/>
            <person name="Hutcheson S."/>
        </authorList>
    </citation>
    <scope>NUCLEOTIDE SEQUENCE [LARGE SCALE GENOMIC DNA]</scope>
    <source>
        <strain>2-40 / ATCC 43961 / DSM 17024</strain>
    </source>
</reference>
<accession>Q21M58</accession>
<evidence type="ECO:0000255" key="1">
    <source>
        <dbReference type="HAMAP-Rule" id="MF_00508"/>
    </source>
</evidence>
<evidence type="ECO:0000305" key="2"/>
<sequence>MQNQRIRIRLKAFDHKLIDASTQEIVETAKRTGAQVRGPIPLPTRKERYTVLVSPHVNKDARDQYEIRTYKRLLDIVEPTEKTVDALMKLDLAAGVEVQISLG</sequence>
<comment type="function">
    <text evidence="1">Involved in the binding of tRNA to the ribosomes.</text>
</comment>
<comment type="subunit">
    <text evidence="1">Part of the 30S ribosomal subunit.</text>
</comment>
<comment type="similarity">
    <text evidence="1">Belongs to the universal ribosomal protein uS10 family.</text>
</comment>
<feature type="chain" id="PRO_0000258572" description="Small ribosomal subunit protein uS10">
    <location>
        <begin position="1"/>
        <end position="103"/>
    </location>
</feature>
<proteinExistence type="inferred from homology"/>
<keyword id="KW-1185">Reference proteome</keyword>
<keyword id="KW-0687">Ribonucleoprotein</keyword>
<keyword id="KW-0689">Ribosomal protein</keyword>
<dbReference type="EMBL" id="CP000282">
    <property type="protein sequence ID" value="ABD80221.1"/>
    <property type="molecule type" value="Genomic_DNA"/>
</dbReference>
<dbReference type="RefSeq" id="WP_011467441.1">
    <property type="nucleotide sequence ID" value="NC_007912.1"/>
</dbReference>
<dbReference type="SMR" id="Q21M58"/>
<dbReference type="STRING" id="203122.Sde_0959"/>
<dbReference type="GeneID" id="98612644"/>
<dbReference type="KEGG" id="sde:Sde_0959"/>
<dbReference type="eggNOG" id="COG0051">
    <property type="taxonomic scope" value="Bacteria"/>
</dbReference>
<dbReference type="HOGENOM" id="CLU_122625_1_3_6"/>
<dbReference type="OrthoDB" id="9804464at2"/>
<dbReference type="Proteomes" id="UP000001947">
    <property type="component" value="Chromosome"/>
</dbReference>
<dbReference type="GO" id="GO:1990904">
    <property type="term" value="C:ribonucleoprotein complex"/>
    <property type="evidence" value="ECO:0007669"/>
    <property type="project" value="UniProtKB-KW"/>
</dbReference>
<dbReference type="GO" id="GO:0005840">
    <property type="term" value="C:ribosome"/>
    <property type="evidence" value="ECO:0007669"/>
    <property type="project" value="UniProtKB-KW"/>
</dbReference>
<dbReference type="GO" id="GO:0003735">
    <property type="term" value="F:structural constituent of ribosome"/>
    <property type="evidence" value="ECO:0007669"/>
    <property type="project" value="InterPro"/>
</dbReference>
<dbReference type="GO" id="GO:0000049">
    <property type="term" value="F:tRNA binding"/>
    <property type="evidence" value="ECO:0007669"/>
    <property type="project" value="UniProtKB-UniRule"/>
</dbReference>
<dbReference type="GO" id="GO:0006412">
    <property type="term" value="P:translation"/>
    <property type="evidence" value="ECO:0007669"/>
    <property type="project" value="UniProtKB-UniRule"/>
</dbReference>
<dbReference type="FunFam" id="3.30.70.600:FF:000001">
    <property type="entry name" value="30S ribosomal protein S10"/>
    <property type="match status" value="1"/>
</dbReference>
<dbReference type="Gene3D" id="3.30.70.600">
    <property type="entry name" value="Ribosomal protein S10 domain"/>
    <property type="match status" value="1"/>
</dbReference>
<dbReference type="HAMAP" id="MF_00508">
    <property type="entry name" value="Ribosomal_uS10"/>
    <property type="match status" value="1"/>
</dbReference>
<dbReference type="InterPro" id="IPR001848">
    <property type="entry name" value="Ribosomal_uS10"/>
</dbReference>
<dbReference type="InterPro" id="IPR018268">
    <property type="entry name" value="Ribosomal_uS10_CS"/>
</dbReference>
<dbReference type="InterPro" id="IPR027486">
    <property type="entry name" value="Ribosomal_uS10_dom"/>
</dbReference>
<dbReference type="InterPro" id="IPR036838">
    <property type="entry name" value="Ribosomal_uS10_dom_sf"/>
</dbReference>
<dbReference type="NCBIfam" id="NF001861">
    <property type="entry name" value="PRK00596.1"/>
    <property type="match status" value="1"/>
</dbReference>
<dbReference type="NCBIfam" id="TIGR01049">
    <property type="entry name" value="rpsJ_bact"/>
    <property type="match status" value="1"/>
</dbReference>
<dbReference type="PANTHER" id="PTHR11700">
    <property type="entry name" value="30S RIBOSOMAL PROTEIN S10 FAMILY MEMBER"/>
    <property type="match status" value="1"/>
</dbReference>
<dbReference type="Pfam" id="PF00338">
    <property type="entry name" value="Ribosomal_S10"/>
    <property type="match status" value="1"/>
</dbReference>
<dbReference type="PRINTS" id="PR00971">
    <property type="entry name" value="RIBOSOMALS10"/>
</dbReference>
<dbReference type="SMART" id="SM01403">
    <property type="entry name" value="Ribosomal_S10"/>
    <property type="match status" value="1"/>
</dbReference>
<dbReference type="SUPFAM" id="SSF54999">
    <property type="entry name" value="Ribosomal protein S10"/>
    <property type="match status" value="1"/>
</dbReference>
<dbReference type="PROSITE" id="PS00361">
    <property type="entry name" value="RIBOSOMAL_S10"/>
    <property type="match status" value="1"/>
</dbReference>
<organism>
    <name type="scientific">Saccharophagus degradans (strain 2-40 / ATCC 43961 / DSM 17024)</name>
    <dbReference type="NCBI Taxonomy" id="203122"/>
    <lineage>
        <taxon>Bacteria</taxon>
        <taxon>Pseudomonadati</taxon>
        <taxon>Pseudomonadota</taxon>
        <taxon>Gammaproteobacteria</taxon>
        <taxon>Cellvibrionales</taxon>
        <taxon>Cellvibrionaceae</taxon>
        <taxon>Saccharophagus</taxon>
    </lineage>
</organism>